<feature type="chain" id="PRO_0000283516" description="Putative F-box protein At4g38870">
    <location>
        <begin position="1"/>
        <end position="426"/>
    </location>
</feature>
<feature type="domain" description="F-box" evidence="1">
    <location>
        <begin position="47"/>
        <end position="92"/>
    </location>
</feature>
<organism>
    <name type="scientific">Arabidopsis thaliana</name>
    <name type="common">Mouse-ear cress</name>
    <dbReference type="NCBI Taxonomy" id="3702"/>
    <lineage>
        <taxon>Eukaryota</taxon>
        <taxon>Viridiplantae</taxon>
        <taxon>Streptophyta</taxon>
        <taxon>Embryophyta</taxon>
        <taxon>Tracheophyta</taxon>
        <taxon>Spermatophyta</taxon>
        <taxon>Magnoliopsida</taxon>
        <taxon>eudicotyledons</taxon>
        <taxon>Gunneridae</taxon>
        <taxon>Pentapetalae</taxon>
        <taxon>rosids</taxon>
        <taxon>malvids</taxon>
        <taxon>Brassicales</taxon>
        <taxon>Brassicaceae</taxon>
        <taxon>Camelineae</taxon>
        <taxon>Arabidopsis</taxon>
    </lineage>
</organism>
<reference key="1">
    <citation type="journal article" date="1999" name="Nature">
        <title>Sequence and analysis of chromosome 4 of the plant Arabidopsis thaliana.</title>
        <authorList>
            <person name="Mayer K.F.X."/>
            <person name="Schueller C."/>
            <person name="Wambutt R."/>
            <person name="Murphy G."/>
            <person name="Volckaert G."/>
            <person name="Pohl T."/>
            <person name="Duesterhoeft A."/>
            <person name="Stiekema W."/>
            <person name="Entian K.-D."/>
            <person name="Terryn N."/>
            <person name="Harris B."/>
            <person name="Ansorge W."/>
            <person name="Brandt P."/>
            <person name="Grivell L.A."/>
            <person name="Rieger M."/>
            <person name="Weichselgartner M."/>
            <person name="de Simone V."/>
            <person name="Obermaier B."/>
            <person name="Mache R."/>
            <person name="Mueller M."/>
            <person name="Kreis M."/>
            <person name="Delseny M."/>
            <person name="Puigdomenech P."/>
            <person name="Watson M."/>
            <person name="Schmidtheini T."/>
            <person name="Reichert B."/>
            <person name="Portetelle D."/>
            <person name="Perez-Alonso M."/>
            <person name="Boutry M."/>
            <person name="Bancroft I."/>
            <person name="Vos P."/>
            <person name="Hoheisel J."/>
            <person name="Zimmermann W."/>
            <person name="Wedler H."/>
            <person name="Ridley P."/>
            <person name="Langham S.-A."/>
            <person name="McCullagh B."/>
            <person name="Bilham L."/>
            <person name="Robben J."/>
            <person name="van der Schueren J."/>
            <person name="Grymonprez B."/>
            <person name="Chuang Y.-J."/>
            <person name="Vandenbussche F."/>
            <person name="Braeken M."/>
            <person name="Weltjens I."/>
            <person name="Voet M."/>
            <person name="Bastiaens I."/>
            <person name="Aert R."/>
            <person name="Defoor E."/>
            <person name="Weitzenegger T."/>
            <person name="Bothe G."/>
            <person name="Ramsperger U."/>
            <person name="Hilbert H."/>
            <person name="Braun M."/>
            <person name="Holzer E."/>
            <person name="Brandt A."/>
            <person name="Peters S."/>
            <person name="van Staveren M."/>
            <person name="Dirkse W."/>
            <person name="Mooijman P."/>
            <person name="Klein Lankhorst R."/>
            <person name="Rose M."/>
            <person name="Hauf J."/>
            <person name="Koetter P."/>
            <person name="Berneiser S."/>
            <person name="Hempel S."/>
            <person name="Feldpausch M."/>
            <person name="Lamberth S."/>
            <person name="Van den Daele H."/>
            <person name="De Keyser A."/>
            <person name="Buysshaert C."/>
            <person name="Gielen J."/>
            <person name="Villarroel R."/>
            <person name="De Clercq R."/>
            <person name="van Montagu M."/>
            <person name="Rogers J."/>
            <person name="Cronin A."/>
            <person name="Quail M.A."/>
            <person name="Bray-Allen S."/>
            <person name="Clark L."/>
            <person name="Doggett J."/>
            <person name="Hall S."/>
            <person name="Kay M."/>
            <person name="Lennard N."/>
            <person name="McLay K."/>
            <person name="Mayes R."/>
            <person name="Pettett A."/>
            <person name="Rajandream M.A."/>
            <person name="Lyne M."/>
            <person name="Benes V."/>
            <person name="Rechmann S."/>
            <person name="Borkova D."/>
            <person name="Bloecker H."/>
            <person name="Scharfe M."/>
            <person name="Grimm M."/>
            <person name="Loehnert T.-H."/>
            <person name="Dose S."/>
            <person name="de Haan M."/>
            <person name="Maarse A.C."/>
            <person name="Schaefer M."/>
            <person name="Mueller-Auer S."/>
            <person name="Gabel C."/>
            <person name="Fuchs M."/>
            <person name="Fartmann B."/>
            <person name="Granderath K."/>
            <person name="Dauner D."/>
            <person name="Herzl A."/>
            <person name="Neumann S."/>
            <person name="Argiriou A."/>
            <person name="Vitale D."/>
            <person name="Liguori R."/>
            <person name="Piravandi E."/>
            <person name="Massenet O."/>
            <person name="Quigley F."/>
            <person name="Clabauld G."/>
            <person name="Muendlein A."/>
            <person name="Felber R."/>
            <person name="Schnabl S."/>
            <person name="Hiller R."/>
            <person name="Schmidt W."/>
            <person name="Lecharny A."/>
            <person name="Aubourg S."/>
            <person name="Chefdor F."/>
            <person name="Cooke R."/>
            <person name="Berger C."/>
            <person name="Monfort A."/>
            <person name="Casacuberta E."/>
            <person name="Gibbons T."/>
            <person name="Weber N."/>
            <person name="Vandenbol M."/>
            <person name="Bargues M."/>
            <person name="Terol J."/>
            <person name="Torres A."/>
            <person name="Perez-Perez A."/>
            <person name="Purnelle B."/>
            <person name="Bent E."/>
            <person name="Johnson S."/>
            <person name="Tacon D."/>
            <person name="Jesse T."/>
            <person name="Heijnen L."/>
            <person name="Schwarz S."/>
            <person name="Scholler P."/>
            <person name="Heber S."/>
            <person name="Francs P."/>
            <person name="Bielke C."/>
            <person name="Frishman D."/>
            <person name="Haase D."/>
            <person name="Lemcke K."/>
            <person name="Mewes H.-W."/>
            <person name="Stocker S."/>
            <person name="Zaccaria P."/>
            <person name="Bevan M."/>
            <person name="Wilson R.K."/>
            <person name="de la Bastide M."/>
            <person name="Habermann K."/>
            <person name="Parnell L."/>
            <person name="Dedhia N."/>
            <person name="Gnoj L."/>
            <person name="Schutz K."/>
            <person name="Huang E."/>
            <person name="Spiegel L."/>
            <person name="Sekhon M."/>
            <person name="Murray J."/>
            <person name="Sheet P."/>
            <person name="Cordes M."/>
            <person name="Abu-Threideh J."/>
            <person name="Stoneking T."/>
            <person name="Kalicki J."/>
            <person name="Graves T."/>
            <person name="Harmon G."/>
            <person name="Edwards J."/>
            <person name="Latreille P."/>
            <person name="Courtney L."/>
            <person name="Cloud J."/>
            <person name="Abbott A."/>
            <person name="Scott K."/>
            <person name="Johnson D."/>
            <person name="Minx P."/>
            <person name="Bentley D."/>
            <person name="Fulton B."/>
            <person name="Miller N."/>
            <person name="Greco T."/>
            <person name="Kemp K."/>
            <person name="Kramer J."/>
            <person name="Fulton L."/>
            <person name="Mardis E."/>
            <person name="Dante M."/>
            <person name="Pepin K."/>
            <person name="Hillier L.W."/>
            <person name="Nelson J."/>
            <person name="Spieth J."/>
            <person name="Ryan E."/>
            <person name="Andrews S."/>
            <person name="Geisel C."/>
            <person name="Layman D."/>
            <person name="Du H."/>
            <person name="Ali J."/>
            <person name="Berghoff A."/>
            <person name="Jones K."/>
            <person name="Drone K."/>
            <person name="Cotton M."/>
            <person name="Joshu C."/>
            <person name="Antonoiu B."/>
            <person name="Zidanic M."/>
            <person name="Strong C."/>
            <person name="Sun H."/>
            <person name="Lamar B."/>
            <person name="Yordan C."/>
            <person name="Ma P."/>
            <person name="Zhong J."/>
            <person name="Preston R."/>
            <person name="Vil D."/>
            <person name="Shekher M."/>
            <person name="Matero A."/>
            <person name="Shah R."/>
            <person name="Swaby I.K."/>
            <person name="O'Shaughnessy A."/>
            <person name="Rodriguez M."/>
            <person name="Hoffman J."/>
            <person name="Till S."/>
            <person name="Granat S."/>
            <person name="Shohdy N."/>
            <person name="Hasegawa A."/>
            <person name="Hameed A."/>
            <person name="Lodhi M."/>
            <person name="Johnson A."/>
            <person name="Chen E."/>
            <person name="Marra M.A."/>
            <person name="Martienssen R."/>
            <person name="McCombie W.R."/>
        </authorList>
    </citation>
    <scope>NUCLEOTIDE SEQUENCE [LARGE SCALE GENOMIC DNA]</scope>
    <source>
        <strain>cv. Columbia</strain>
    </source>
</reference>
<reference key="2">
    <citation type="journal article" date="2017" name="Plant J.">
        <title>Araport11: a complete reannotation of the Arabidopsis thaliana reference genome.</title>
        <authorList>
            <person name="Cheng C.Y."/>
            <person name="Krishnakumar V."/>
            <person name="Chan A.P."/>
            <person name="Thibaud-Nissen F."/>
            <person name="Schobel S."/>
            <person name="Town C.D."/>
        </authorList>
    </citation>
    <scope>GENOME REANNOTATION</scope>
    <source>
        <strain>cv. Columbia</strain>
    </source>
</reference>
<evidence type="ECO:0000255" key="1">
    <source>
        <dbReference type="PROSITE-ProRule" id="PRU00080"/>
    </source>
</evidence>
<protein>
    <recommendedName>
        <fullName>Putative F-box protein At4g38870</fullName>
    </recommendedName>
</protein>
<proteinExistence type="predicted"/>
<accession>Q9T0J4</accession>
<name>FB249_ARATH</name>
<sequence length="426" mass="48337">MKTLGFSPKQKFCARRQTQRWLPEGDRSSSFTPSTMETQRKKFTKVSVNSELLPVDLIMEILKKLSLKPLIRFLCVSKLWASIIRDPYFMKLFLNESLKRPKSLVFVFRAQSLGSIFSSVHLKSTREISSSSSSSSASSITYHVTCYTQQRMTISPSVHGLICYGPPSSLVIYNPCTRRSITLPKIKAGRRAINQYIGYDPLDGNYKVVCITRGMPMLRNRRGLAEEIQVLTLGTRDSSWRMIHDIIPPHSPVSEELCINGVLYYRAFIGTKLNESAIMSFDVRSEKFDLIKVPCNFRSFSKLAKYEGKLAVIFYEKKTSGIIGLWILEDASNGEWSKKTFALPNLAASSTNSRILKLQKFRTTDADTCEIIFTPSYAHSSLSSAIYCDLKENKVRKFVKEGWTENYLPCNADSVSSTQVENLMFL</sequence>
<gene>
    <name type="ordered locus">At4g38870</name>
    <name type="ORF">F19H22.2</name>
</gene>
<keyword id="KW-1185">Reference proteome</keyword>
<dbReference type="EMBL" id="AL035656">
    <property type="protein sequence ID" value="CAB38621.1"/>
    <property type="molecule type" value="Genomic_DNA"/>
</dbReference>
<dbReference type="EMBL" id="AL161594">
    <property type="protein sequence ID" value="CAB80550.1"/>
    <property type="molecule type" value="Genomic_DNA"/>
</dbReference>
<dbReference type="EMBL" id="CP002687">
    <property type="protein sequence ID" value="AEE86985.1"/>
    <property type="molecule type" value="Genomic_DNA"/>
</dbReference>
<dbReference type="PIR" id="T06086">
    <property type="entry name" value="T06086"/>
</dbReference>
<dbReference type="RefSeq" id="NP_195598.1">
    <property type="nucleotide sequence ID" value="NM_120047.2"/>
</dbReference>
<dbReference type="SMR" id="Q9T0J4"/>
<dbReference type="FunCoup" id="Q9T0J4">
    <property type="interactions" value="37"/>
</dbReference>
<dbReference type="STRING" id="3702.Q9T0J4"/>
<dbReference type="PaxDb" id="3702-AT4G38870.1"/>
<dbReference type="ProteomicsDB" id="222398"/>
<dbReference type="EnsemblPlants" id="AT4G38870.1">
    <property type="protein sequence ID" value="AT4G38870.1"/>
    <property type="gene ID" value="AT4G38870"/>
</dbReference>
<dbReference type="GeneID" id="830042"/>
<dbReference type="Gramene" id="AT4G38870.1">
    <property type="protein sequence ID" value="AT4G38870.1"/>
    <property type="gene ID" value="AT4G38870"/>
</dbReference>
<dbReference type="KEGG" id="ath:AT4G38870"/>
<dbReference type="Araport" id="AT4G38870"/>
<dbReference type="TAIR" id="AT4G38870"/>
<dbReference type="eggNOG" id="ENOG502SNHU">
    <property type="taxonomic scope" value="Eukaryota"/>
</dbReference>
<dbReference type="HOGENOM" id="CLU_027176_8_1_1"/>
<dbReference type="InParanoid" id="Q9T0J4"/>
<dbReference type="OMA" id="KFCARRQ"/>
<dbReference type="PhylomeDB" id="Q9T0J4"/>
<dbReference type="PRO" id="PR:Q9T0J4"/>
<dbReference type="Proteomes" id="UP000006548">
    <property type="component" value="Chromosome 4"/>
</dbReference>
<dbReference type="ExpressionAtlas" id="Q9T0J4">
    <property type="expression patterns" value="baseline and differential"/>
</dbReference>
<dbReference type="Gene3D" id="1.20.1280.50">
    <property type="match status" value="1"/>
</dbReference>
<dbReference type="InterPro" id="IPR013187">
    <property type="entry name" value="F-box-assoc_dom_typ3"/>
</dbReference>
<dbReference type="InterPro" id="IPR017451">
    <property type="entry name" value="F-box-assoc_interact_dom"/>
</dbReference>
<dbReference type="InterPro" id="IPR036047">
    <property type="entry name" value="F-box-like_dom_sf"/>
</dbReference>
<dbReference type="InterPro" id="IPR001810">
    <property type="entry name" value="F-box_dom"/>
</dbReference>
<dbReference type="NCBIfam" id="TIGR01640">
    <property type="entry name" value="F_box_assoc_1"/>
    <property type="match status" value="1"/>
</dbReference>
<dbReference type="PANTHER" id="PTHR31111">
    <property type="entry name" value="BNAA05G37150D PROTEIN-RELATED"/>
    <property type="match status" value="1"/>
</dbReference>
<dbReference type="PANTHER" id="PTHR31111:SF132">
    <property type="entry name" value="F-BOX ASSOCIATED UBIQUITINATION EFFECTOR FAMILY PROTEIN-RELATED"/>
    <property type="match status" value="1"/>
</dbReference>
<dbReference type="Pfam" id="PF00646">
    <property type="entry name" value="F-box"/>
    <property type="match status" value="1"/>
</dbReference>
<dbReference type="Pfam" id="PF08268">
    <property type="entry name" value="FBA_3"/>
    <property type="match status" value="1"/>
</dbReference>
<dbReference type="SMART" id="SM00256">
    <property type="entry name" value="FBOX"/>
    <property type="match status" value="1"/>
</dbReference>
<dbReference type="SUPFAM" id="SSF81383">
    <property type="entry name" value="F-box domain"/>
    <property type="match status" value="1"/>
</dbReference>
<dbReference type="PROSITE" id="PS50181">
    <property type="entry name" value="FBOX"/>
    <property type="match status" value="1"/>
</dbReference>